<proteinExistence type="evidence at transcript level"/>
<name>MKRN1_NOTEU</name>
<dbReference type="EC" id="2.3.2.27"/>
<dbReference type="EMBL" id="AF192786">
    <property type="protein sequence ID" value="AAF17489.1"/>
    <property type="molecule type" value="mRNA"/>
</dbReference>
<dbReference type="HOGENOM" id="CLU_040815_4_1_1"/>
<dbReference type="TreeFam" id="TF315108"/>
<dbReference type="UniPathway" id="UPA00143"/>
<dbReference type="GO" id="GO:0061630">
    <property type="term" value="F:ubiquitin protein ligase activity"/>
    <property type="evidence" value="ECO:0007669"/>
    <property type="project" value="InterPro"/>
</dbReference>
<dbReference type="GO" id="GO:0008270">
    <property type="term" value="F:zinc ion binding"/>
    <property type="evidence" value="ECO:0007669"/>
    <property type="project" value="UniProtKB-KW"/>
</dbReference>
<dbReference type="GO" id="GO:0000209">
    <property type="term" value="P:protein polyubiquitination"/>
    <property type="evidence" value="ECO:0007669"/>
    <property type="project" value="InterPro"/>
</dbReference>
<dbReference type="CDD" id="cd16730">
    <property type="entry name" value="RING-HC_MKRN1_3"/>
    <property type="match status" value="1"/>
</dbReference>
<dbReference type="FunFam" id="3.30.40.10:FF:000117">
    <property type="entry name" value="Probable E3 ubiquitin-protein ligase makorin-1"/>
    <property type="match status" value="1"/>
</dbReference>
<dbReference type="Gene3D" id="2.30.30.1190">
    <property type="match status" value="1"/>
</dbReference>
<dbReference type="Gene3D" id="1.20.120.1350">
    <property type="entry name" value="Pneumovirus matrix protein 2 (M2), zinc-binding domain"/>
    <property type="match status" value="1"/>
</dbReference>
<dbReference type="Gene3D" id="4.10.1000.10">
    <property type="entry name" value="Zinc finger, CCCH-type"/>
    <property type="match status" value="1"/>
</dbReference>
<dbReference type="Gene3D" id="3.30.40.10">
    <property type="entry name" value="Zinc/RING finger domain, C3HC4 (zinc finger)"/>
    <property type="match status" value="1"/>
</dbReference>
<dbReference type="InterPro" id="IPR029035">
    <property type="entry name" value="DHS-like_NAD/FAD-binding_dom"/>
</dbReference>
<dbReference type="InterPro" id="IPR045072">
    <property type="entry name" value="MKRN-like"/>
</dbReference>
<dbReference type="InterPro" id="IPR031644">
    <property type="entry name" value="MKRN1_C"/>
</dbReference>
<dbReference type="InterPro" id="IPR041367">
    <property type="entry name" value="Znf-CCCH_4"/>
</dbReference>
<dbReference type="InterPro" id="IPR018957">
    <property type="entry name" value="Znf_C3HC4_RING-type"/>
</dbReference>
<dbReference type="InterPro" id="IPR000571">
    <property type="entry name" value="Znf_CCCH"/>
</dbReference>
<dbReference type="InterPro" id="IPR036855">
    <property type="entry name" value="Znf_CCCH_sf"/>
</dbReference>
<dbReference type="InterPro" id="IPR001841">
    <property type="entry name" value="Znf_RING"/>
</dbReference>
<dbReference type="InterPro" id="IPR013083">
    <property type="entry name" value="Znf_RING/FYVE/PHD"/>
</dbReference>
<dbReference type="InterPro" id="IPR017907">
    <property type="entry name" value="Znf_RING_CS"/>
</dbReference>
<dbReference type="PANTHER" id="PTHR11224:SF37">
    <property type="entry name" value="E3 UBIQUITIN-PROTEIN LIGASE MAKORIN-1"/>
    <property type="match status" value="1"/>
</dbReference>
<dbReference type="PANTHER" id="PTHR11224">
    <property type="entry name" value="MAKORIN-RELATED"/>
    <property type="match status" value="1"/>
</dbReference>
<dbReference type="Pfam" id="PF15815">
    <property type="entry name" value="MKRN1_C"/>
    <property type="match status" value="1"/>
</dbReference>
<dbReference type="Pfam" id="PF00097">
    <property type="entry name" value="zf-C3HC4"/>
    <property type="match status" value="1"/>
</dbReference>
<dbReference type="Pfam" id="PF14608">
    <property type="entry name" value="zf-CCCH_2"/>
    <property type="match status" value="1"/>
</dbReference>
<dbReference type="Pfam" id="PF18044">
    <property type="entry name" value="zf-CCCH_4"/>
    <property type="match status" value="3"/>
</dbReference>
<dbReference type="SMART" id="SM00184">
    <property type="entry name" value="RING"/>
    <property type="match status" value="1"/>
</dbReference>
<dbReference type="SMART" id="SM00356">
    <property type="entry name" value="ZnF_C3H1"/>
    <property type="match status" value="4"/>
</dbReference>
<dbReference type="SUPFAM" id="SSF90229">
    <property type="entry name" value="CCCH zinc finger"/>
    <property type="match status" value="2"/>
</dbReference>
<dbReference type="SUPFAM" id="SSF52467">
    <property type="entry name" value="DHS-like NAD/FAD-binding domain"/>
    <property type="match status" value="1"/>
</dbReference>
<dbReference type="SUPFAM" id="SSF57850">
    <property type="entry name" value="RING/U-box"/>
    <property type="match status" value="1"/>
</dbReference>
<dbReference type="PROSITE" id="PS50103">
    <property type="entry name" value="ZF_C3H1"/>
    <property type="match status" value="4"/>
</dbReference>
<dbReference type="PROSITE" id="PS00518">
    <property type="entry name" value="ZF_RING_1"/>
    <property type="match status" value="1"/>
</dbReference>
<dbReference type="PROSITE" id="PS50089">
    <property type="entry name" value="ZF_RING_2"/>
    <property type="match status" value="1"/>
</dbReference>
<keyword id="KW-0479">Metal-binding</keyword>
<keyword id="KW-0677">Repeat</keyword>
<keyword id="KW-0808">Transferase</keyword>
<keyword id="KW-0832">Ubl conjugation</keyword>
<keyword id="KW-0833">Ubl conjugation pathway</keyword>
<keyword id="KW-0862">Zinc</keyword>
<keyword id="KW-0863">Zinc-finger</keyword>
<organism>
    <name type="scientific">Notamacropus eugenii</name>
    <name type="common">Tammar wallaby</name>
    <name type="synonym">Macropus eugenii</name>
    <dbReference type="NCBI Taxonomy" id="9315"/>
    <lineage>
        <taxon>Eukaryota</taxon>
        <taxon>Metazoa</taxon>
        <taxon>Chordata</taxon>
        <taxon>Craniata</taxon>
        <taxon>Vertebrata</taxon>
        <taxon>Euteleostomi</taxon>
        <taxon>Mammalia</taxon>
        <taxon>Metatheria</taxon>
        <taxon>Diprotodontia</taxon>
        <taxon>Macropodidae</taxon>
        <taxon>Notamacropus</taxon>
    </lineage>
</organism>
<feature type="chain" id="PRO_0000055953" description="E3 ubiquitin-protein ligase makorin-1">
    <location>
        <begin position="1"/>
        <end position="478"/>
    </location>
</feature>
<feature type="zinc finger region" description="C3H1-type 1" evidence="4">
    <location>
        <begin position="51"/>
        <end position="78"/>
    </location>
</feature>
<feature type="zinc finger region" description="C3H1-type 2" evidence="4">
    <location>
        <begin position="80"/>
        <end position="107"/>
    </location>
</feature>
<feature type="zinc finger region" description="C3H1-type 3" evidence="4">
    <location>
        <begin position="204"/>
        <end position="231"/>
    </location>
</feature>
<feature type="zinc finger region" description="RING-type" evidence="3">
    <location>
        <begin position="277"/>
        <end position="331"/>
    </location>
</feature>
<feature type="zinc finger region" description="C3H1-type 4" evidence="4">
    <location>
        <begin position="360"/>
        <end position="389"/>
    </location>
</feature>
<feature type="region of interest" description="Makorin-type Cys-His">
    <location>
        <begin position="232"/>
        <end position="259"/>
    </location>
</feature>
<evidence type="ECO:0000250" key="1"/>
<evidence type="ECO:0000250" key="2">
    <source>
        <dbReference type="UniProtKB" id="Q9UHC7"/>
    </source>
</evidence>
<evidence type="ECO:0000255" key="3">
    <source>
        <dbReference type="PROSITE-ProRule" id="PRU00175"/>
    </source>
</evidence>
<evidence type="ECO:0000255" key="4">
    <source>
        <dbReference type="PROSITE-ProRule" id="PRU00723"/>
    </source>
</evidence>
<evidence type="ECO:0000305" key="5"/>
<protein>
    <recommendedName>
        <fullName>E3 ubiquitin-protein ligase makorin-1</fullName>
        <ecNumber>2.3.2.27</ecNumber>
    </recommendedName>
    <alternativeName>
        <fullName evidence="5">RING-type E3 ubiquitin transferase makorin-1</fullName>
    </alternativeName>
</protein>
<reference key="1">
    <citation type="journal article" date="2000" name="Genomics">
        <title>The ancient source of a distinct gene family encoding proteins featuring RING and C(3)H zinc-finger motifs with abundant expression in developing brain and nervous system.</title>
        <authorList>
            <person name="Gray T.A."/>
            <person name="Hernandez L."/>
            <person name="Carey A.H."/>
            <person name="Schaldach M.A."/>
            <person name="Smithwick M.J."/>
            <person name="Rus K."/>
            <person name="Marshall Graves J.A."/>
            <person name="Stewart C.L."/>
            <person name="Nicholls R.D."/>
        </authorList>
    </citation>
    <scope>NUCLEOTIDE SEQUENCE [MRNA]</scope>
</reference>
<gene>
    <name type="primary">MKRN1</name>
</gene>
<accession>Q9TT91</accession>
<sequence length="478" mass="52905">MAEAAAPGTTATTSGAAAAAAVAAASPTLTPTVASQSPAAGGGGGGSGGGWTKQVTCRYFMHGVCKKGNNCRYSHDLSTSQSAMVCRYYQRGCCAYGDRCRYEHTKPLKREEVTAANLAAKSDLPASSSLPALVEPLAEVSTGEAESVNSNFAAAGAGGEDWVNAIEFVPGQPYCGRAAPSCTEAPLQGMVIEEELEKQQTNVEMKKQLCPYAAVGECRYGENCVYLHGDACDMCGLQVLHPVDAAQRSQHIKSCIEAHEKDMELSFAVQRSKDMVCGICMEVVYEKANPSERRFGILSNCNHTYCLKCIRKWRSAKQFESKIIKSCPECRITSNFVIPSEYWVEEKEEKQKLIQKYKEAMSNKPCRYFDEGRGSCPFGGNCFYKHAYPDGRREEPQRQKVGTSNRYRAQRRNRFWELIEERESSNPFDNDEDEVVTFELGEMLLMLLAAGGDDDLTDPEDEWDLFHDELEDYYDLDL</sequence>
<comment type="function">
    <text evidence="2">E3 ubiquitin ligase catalyzing the covalent attachment of ubiquitin moieties onto substrate proteins. These substrates include FILIP1, p53/TP53, CDKN1A and TERT. Keeps cells alive by suppressing p53/TP53 under normal conditions, but stimulates apoptosis by repressing CDKN1A under stress conditions. Acts as a negative regulator of telomerase. Has negative and positive effects on RNA polymerase II-dependent transcription.</text>
</comment>
<comment type="catalytic activity">
    <reaction>
        <text>S-ubiquitinyl-[E2 ubiquitin-conjugating enzyme]-L-cysteine + [acceptor protein]-L-lysine = [E2 ubiquitin-conjugating enzyme]-L-cysteine + N(6)-ubiquitinyl-[acceptor protein]-L-lysine.</text>
        <dbReference type="EC" id="2.3.2.27"/>
    </reaction>
</comment>
<comment type="pathway">
    <text>Protein modification; protein ubiquitination.</text>
</comment>
<comment type="subunit">
    <text evidence="1">Interacts with p53/TP53 and CDKN1A. Interacts with TERT, modulating telomere length homeostasis (By similarity).</text>
</comment>
<comment type="PTM">
    <text evidence="1">Auto-ubiquitinated; which leads to proteasomal degradation.</text>
</comment>